<name>ACP_MICLC</name>
<protein>
    <recommendedName>
        <fullName evidence="1">Acyl carrier protein</fullName>
        <shortName evidence="1">ACP</shortName>
    </recommendedName>
</protein>
<feature type="chain" id="PRO_1000213913" description="Acyl carrier protein">
    <location>
        <begin position="1"/>
        <end position="81"/>
    </location>
</feature>
<feature type="domain" description="Carrier" evidence="2">
    <location>
        <begin position="2"/>
        <end position="80"/>
    </location>
</feature>
<feature type="modified residue" description="O-(pantetheine 4'-phosphoryl)serine" evidence="2">
    <location>
        <position position="40"/>
    </location>
</feature>
<reference key="1">
    <citation type="journal article" date="2010" name="J. Bacteriol.">
        <title>Genome sequence of the Fleming strain of Micrococcus luteus, a simple free-living actinobacterium.</title>
        <authorList>
            <person name="Young M."/>
            <person name="Artsatbanov V."/>
            <person name="Beller H.R."/>
            <person name="Chandra G."/>
            <person name="Chater K.F."/>
            <person name="Dover L.G."/>
            <person name="Goh E.B."/>
            <person name="Kahan T."/>
            <person name="Kaprelyants A.S."/>
            <person name="Kyrpides N."/>
            <person name="Lapidus A."/>
            <person name="Lowry S.R."/>
            <person name="Lykidis A."/>
            <person name="Mahillon J."/>
            <person name="Markowitz V."/>
            <person name="Mavromatis K."/>
            <person name="Mukamolova G.V."/>
            <person name="Oren A."/>
            <person name="Rokem J.S."/>
            <person name="Smith M.C."/>
            <person name="Young D.I."/>
            <person name="Greenblatt C.L."/>
        </authorList>
    </citation>
    <scope>NUCLEOTIDE SEQUENCE [LARGE SCALE GENOMIC DNA]</scope>
    <source>
        <strain>ATCC 4698 / DSM 20030 / JCM 1464 / CCM 169 / CCUG 5858 / IAM 1056 / NBRC 3333 / NCIMB 9278 / NCTC 2665 / VKM Ac-2230</strain>
    </source>
</reference>
<keyword id="KW-0963">Cytoplasm</keyword>
<keyword id="KW-0275">Fatty acid biosynthesis</keyword>
<keyword id="KW-0276">Fatty acid metabolism</keyword>
<keyword id="KW-0444">Lipid biosynthesis</keyword>
<keyword id="KW-0443">Lipid metabolism</keyword>
<keyword id="KW-0596">Phosphopantetheine</keyword>
<keyword id="KW-0597">Phosphoprotein</keyword>
<keyword id="KW-1185">Reference proteome</keyword>
<proteinExistence type="inferred from homology"/>
<sequence>MASKEEILAGLAEIVNEETGLDTAEVQPEKSFTDDLDIDSISMMTIVVNAEDKFGVKIPDEEVKNLKTVQDAVDFIDGAQA</sequence>
<accession>C5CAR8</accession>
<organism>
    <name type="scientific">Micrococcus luteus (strain ATCC 4698 / DSM 20030 / JCM 1464 / CCM 169 / CCUG 5858 / IAM 1056 / NBRC 3333 / NCIMB 9278 / NCTC 2665 / VKM Ac-2230)</name>
    <name type="common">Micrococcus lysodeikticus</name>
    <dbReference type="NCBI Taxonomy" id="465515"/>
    <lineage>
        <taxon>Bacteria</taxon>
        <taxon>Bacillati</taxon>
        <taxon>Actinomycetota</taxon>
        <taxon>Actinomycetes</taxon>
        <taxon>Micrococcales</taxon>
        <taxon>Micrococcaceae</taxon>
        <taxon>Micrococcus</taxon>
    </lineage>
</organism>
<dbReference type="EMBL" id="CP001628">
    <property type="protein sequence ID" value="ACS30451.1"/>
    <property type="molecule type" value="Genomic_DNA"/>
</dbReference>
<dbReference type="RefSeq" id="WP_010078906.1">
    <property type="nucleotide sequence ID" value="NZ_WBMF01000009.1"/>
</dbReference>
<dbReference type="SMR" id="C5CAR8"/>
<dbReference type="STRING" id="465515.Mlut_09300"/>
<dbReference type="EnsemblBacteria" id="ACS30451">
    <property type="protein sequence ID" value="ACS30451"/>
    <property type="gene ID" value="Mlut_09300"/>
</dbReference>
<dbReference type="KEGG" id="mlu:Mlut_09300"/>
<dbReference type="eggNOG" id="COG0236">
    <property type="taxonomic scope" value="Bacteria"/>
</dbReference>
<dbReference type="HOGENOM" id="CLU_108696_5_6_11"/>
<dbReference type="UniPathway" id="UPA00094"/>
<dbReference type="Proteomes" id="UP000000738">
    <property type="component" value="Chromosome"/>
</dbReference>
<dbReference type="GO" id="GO:0005829">
    <property type="term" value="C:cytosol"/>
    <property type="evidence" value="ECO:0007669"/>
    <property type="project" value="TreeGrafter"/>
</dbReference>
<dbReference type="GO" id="GO:0016020">
    <property type="term" value="C:membrane"/>
    <property type="evidence" value="ECO:0007669"/>
    <property type="project" value="GOC"/>
</dbReference>
<dbReference type="GO" id="GO:0000035">
    <property type="term" value="F:acyl binding"/>
    <property type="evidence" value="ECO:0007669"/>
    <property type="project" value="TreeGrafter"/>
</dbReference>
<dbReference type="GO" id="GO:0000036">
    <property type="term" value="F:acyl carrier activity"/>
    <property type="evidence" value="ECO:0007669"/>
    <property type="project" value="UniProtKB-UniRule"/>
</dbReference>
<dbReference type="GO" id="GO:0009245">
    <property type="term" value="P:lipid A biosynthetic process"/>
    <property type="evidence" value="ECO:0007669"/>
    <property type="project" value="TreeGrafter"/>
</dbReference>
<dbReference type="Gene3D" id="1.10.1200.10">
    <property type="entry name" value="ACP-like"/>
    <property type="match status" value="1"/>
</dbReference>
<dbReference type="HAMAP" id="MF_01217">
    <property type="entry name" value="Acyl_carrier"/>
    <property type="match status" value="1"/>
</dbReference>
<dbReference type="InterPro" id="IPR003231">
    <property type="entry name" value="ACP"/>
</dbReference>
<dbReference type="InterPro" id="IPR036736">
    <property type="entry name" value="ACP-like_sf"/>
</dbReference>
<dbReference type="InterPro" id="IPR009081">
    <property type="entry name" value="PP-bd_ACP"/>
</dbReference>
<dbReference type="NCBIfam" id="NF002147">
    <property type="entry name" value="PRK00982.1-1"/>
    <property type="match status" value="1"/>
</dbReference>
<dbReference type="NCBIfam" id="NF002148">
    <property type="entry name" value="PRK00982.1-2"/>
    <property type="match status" value="1"/>
</dbReference>
<dbReference type="NCBIfam" id="NF002150">
    <property type="entry name" value="PRK00982.1-4"/>
    <property type="match status" value="1"/>
</dbReference>
<dbReference type="PANTHER" id="PTHR20863">
    <property type="entry name" value="ACYL CARRIER PROTEIN"/>
    <property type="match status" value="1"/>
</dbReference>
<dbReference type="PANTHER" id="PTHR20863:SF76">
    <property type="entry name" value="CARRIER DOMAIN-CONTAINING PROTEIN"/>
    <property type="match status" value="1"/>
</dbReference>
<dbReference type="Pfam" id="PF00550">
    <property type="entry name" value="PP-binding"/>
    <property type="match status" value="1"/>
</dbReference>
<dbReference type="SUPFAM" id="SSF47336">
    <property type="entry name" value="ACP-like"/>
    <property type="match status" value="1"/>
</dbReference>
<dbReference type="PROSITE" id="PS50075">
    <property type="entry name" value="CARRIER"/>
    <property type="match status" value="1"/>
</dbReference>
<gene>
    <name evidence="1" type="primary">acpP</name>
    <name type="ordered locus">Mlut_09300</name>
</gene>
<evidence type="ECO:0000255" key="1">
    <source>
        <dbReference type="HAMAP-Rule" id="MF_01217"/>
    </source>
</evidence>
<evidence type="ECO:0000255" key="2">
    <source>
        <dbReference type="PROSITE-ProRule" id="PRU00258"/>
    </source>
</evidence>
<comment type="function">
    <text evidence="1">Carrier of the growing fatty acid chain in fatty acid biosynthesis.</text>
</comment>
<comment type="pathway">
    <text evidence="1">Lipid metabolism; fatty acid biosynthesis.</text>
</comment>
<comment type="subcellular location">
    <subcellularLocation>
        <location evidence="1">Cytoplasm</location>
    </subcellularLocation>
</comment>
<comment type="PTM">
    <text evidence="1">4'-phosphopantetheine is transferred from CoA to a specific serine of apo-ACP by AcpS. This modification is essential for activity because fatty acids are bound in thioester linkage to the sulfhydryl of the prosthetic group.</text>
</comment>
<comment type="similarity">
    <text evidence="1">Belongs to the acyl carrier protein (ACP) family.</text>
</comment>